<sequence>MHSLKKLTFEDVAIDFTQEEWAMMDTSKRKLYRDVMLENISHLVSLGYQISKSYIILQLEQGKELWREGRVFLQDQNPNRESALKKTHMISMHPITRKDASTSMTMENSLILEDPFECNDSGEDCTRSSTITQCLLTHSGKKPYVSKQCGKSLRNLLSTEPHKQIHTKGKSYQCNLCEKAYTNCFHLRRHKMTHTGERPYACHLCRKAFTQCSHLRRHEKTHTGQRPYKCHQYGKVFIQSFNLQRHERTHLGKKCYECDKSGKAFSQSSGFRGNKIIHTGEKPHACLLCGKAFSLSSNLR</sequence>
<evidence type="ECO:0000250" key="1"/>
<evidence type="ECO:0000255" key="2">
    <source>
        <dbReference type="PROSITE-ProRule" id="PRU00042"/>
    </source>
</evidence>
<evidence type="ECO:0000255" key="3">
    <source>
        <dbReference type="PROSITE-ProRule" id="PRU00119"/>
    </source>
</evidence>
<evidence type="ECO:0000305" key="4"/>
<name>Z705G_HUMAN</name>
<reference key="1">
    <citation type="journal article" date="2006" name="Nature">
        <title>DNA sequence and analysis of human chromosome 8.</title>
        <authorList>
            <person name="Nusbaum C."/>
            <person name="Mikkelsen T.S."/>
            <person name="Zody M.C."/>
            <person name="Asakawa S."/>
            <person name="Taudien S."/>
            <person name="Garber M."/>
            <person name="Kodira C.D."/>
            <person name="Schueler M.G."/>
            <person name="Shimizu A."/>
            <person name="Whittaker C.A."/>
            <person name="Chang J.L."/>
            <person name="Cuomo C.A."/>
            <person name="Dewar K."/>
            <person name="FitzGerald M.G."/>
            <person name="Yang X."/>
            <person name="Allen N.R."/>
            <person name="Anderson S."/>
            <person name="Asakawa T."/>
            <person name="Blechschmidt K."/>
            <person name="Bloom T."/>
            <person name="Borowsky M.L."/>
            <person name="Butler J."/>
            <person name="Cook A."/>
            <person name="Corum B."/>
            <person name="DeArellano K."/>
            <person name="DeCaprio D."/>
            <person name="Dooley K.T."/>
            <person name="Dorris L. III"/>
            <person name="Engels R."/>
            <person name="Gloeckner G."/>
            <person name="Hafez N."/>
            <person name="Hagopian D.S."/>
            <person name="Hall J.L."/>
            <person name="Ishikawa S.K."/>
            <person name="Jaffe D.B."/>
            <person name="Kamat A."/>
            <person name="Kudoh J."/>
            <person name="Lehmann R."/>
            <person name="Lokitsang T."/>
            <person name="Macdonald P."/>
            <person name="Major J.E."/>
            <person name="Matthews C.D."/>
            <person name="Mauceli E."/>
            <person name="Menzel U."/>
            <person name="Mihalev A.H."/>
            <person name="Minoshima S."/>
            <person name="Murayama Y."/>
            <person name="Naylor J.W."/>
            <person name="Nicol R."/>
            <person name="Nguyen C."/>
            <person name="O'Leary S.B."/>
            <person name="O'Neill K."/>
            <person name="Parker S.C.J."/>
            <person name="Polley A."/>
            <person name="Raymond C.K."/>
            <person name="Reichwald K."/>
            <person name="Rodriguez J."/>
            <person name="Sasaki T."/>
            <person name="Schilhabel M."/>
            <person name="Siddiqui R."/>
            <person name="Smith C.L."/>
            <person name="Sneddon T.P."/>
            <person name="Talamas J.A."/>
            <person name="Tenzin P."/>
            <person name="Topham K."/>
            <person name="Venkataraman V."/>
            <person name="Wen G."/>
            <person name="Yamazaki S."/>
            <person name="Young S.K."/>
            <person name="Zeng Q."/>
            <person name="Zimmer A.R."/>
            <person name="Rosenthal A."/>
            <person name="Birren B.W."/>
            <person name="Platzer M."/>
            <person name="Shimizu N."/>
            <person name="Lander E.S."/>
        </authorList>
    </citation>
    <scope>NUCLEOTIDE SEQUENCE [LARGE SCALE GENOMIC DNA]</scope>
</reference>
<reference key="2">
    <citation type="submission" date="2000-07" db="EMBL/GenBank/DDBJ databases">
        <authorList>
            <consortium name="The Cancer Genome Anatomy Project (CGAP) at the National Cancer Institute"/>
        </authorList>
    </citation>
    <scope>NUCLEOTIDE SEQUENCE [LARGE SCALE MRNA] OF 1-169</scope>
</reference>
<keyword id="KW-0238">DNA-binding</keyword>
<keyword id="KW-0479">Metal-binding</keyword>
<keyword id="KW-0539">Nucleus</keyword>
<keyword id="KW-1185">Reference proteome</keyword>
<keyword id="KW-0677">Repeat</keyword>
<keyword id="KW-0804">Transcription</keyword>
<keyword id="KW-0805">Transcription regulation</keyword>
<keyword id="KW-0862">Zinc</keyword>
<keyword id="KW-0863">Zinc-finger</keyword>
<feature type="chain" id="PRO_0000342396" description="Putative zinc finger protein 705G">
    <location>
        <begin position="1"/>
        <end position="300"/>
    </location>
</feature>
<feature type="domain" description="KRAB" evidence="3">
    <location>
        <begin position="7"/>
        <end position="78"/>
    </location>
</feature>
<feature type="zinc finger region" description="C2H2-type 1" evidence="2">
    <location>
        <begin position="172"/>
        <end position="194"/>
    </location>
</feature>
<feature type="zinc finger region" description="C2H2-type 2" evidence="2">
    <location>
        <begin position="200"/>
        <end position="222"/>
    </location>
</feature>
<feature type="zinc finger region" description="C2H2-type 3; degenerate" evidence="2">
    <location>
        <begin position="228"/>
        <end position="250"/>
    </location>
</feature>
<feature type="zinc finger region" description="C2H2-type 4; degenerate" evidence="2">
    <location>
        <begin position="256"/>
        <end position="278"/>
    </location>
</feature>
<accession>A8MUZ8</accession>
<dbReference type="EMBL" id="AC130360">
    <property type="status" value="NOT_ANNOTATED_CDS"/>
    <property type="molecule type" value="Genomic_DNA"/>
</dbReference>
<dbReference type="EMBL" id="BE466749">
    <property type="status" value="NOT_ANNOTATED_CDS"/>
    <property type="molecule type" value="mRNA"/>
</dbReference>
<dbReference type="CCDS" id="CCDS47773.1"/>
<dbReference type="RefSeq" id="NP_001157929.1">
    <property type="nucleotide sequence ID" value="NM_001164457.3"/>
</dbReference>
<dbReference type="RefSeq" id="XP_016868430.1">
    <property type="nucleotide sequence ID" value="XM_017012941.1"/>
</dbReference>
<dbReference type="RefSeq" id="XP_016868431.1">
    <property type="nucleotide sequence ID" value="XM_017012942.1"/>
</dbReference>
<dbReference type="SMR" id="A8MUZ8"/>
<dbReference type="BioGRID" id="573352">
    <property type="interactions" value="2"/>
</dbReference>
<dbReference type="STRING" id="9606.ENSP00000383020"/>
<dbReference type="iPTMnet" id="A8MUZ8"/>
<dbReference type="PhosphoSitePlus" id="A8MUZ8"/>
<dbReference type="BioMuta" id="ZNF705G"/>
<dbReference type="MassIVE" id="A8MUZ8"/>
<dbReference type="PaxDb" id="9606-ENSP00000383020"/>
<dbReference type="PeptideAtlas" id="A8MUZ8"/>
<dbReference type="Antibodypedia" id="76320">
    <property type="antibodies" value="2 antibodies from 2 providers"/>
</dbReference>
<dbReference type="DNASU" id="100131980"/>
<dbReference type="Ensembl" id="ENST00000400156.4">
    <property type="protein sequence ID" value="ENSP00000383020.4"/>
    <property type="gene ID" value="ENSG00000215372.6"/>
</dbReference>
<dbReference type="GeneID" id="100131980"/>
<dbReference type="KEGG" id="hsa:100131980"/>
<dbReference type="MANE-Select" id="ENST00000400156.4">
    <property type="protein sequence ID" value="ENSP00000383020.4"/>
    <property type="RefSeq nucleotide sequence ID" value="NM_001164457.3"/>
    <property type="RefSeq protein sequence ID" value="NP_001157929.1"/>
</dbReference>
<dbReference type="UCSC" id="uc033bav.2">
    <property type="organism name" value="human"/>
</dbReference>
<dbReference type="AGR" id="HGNC:37134"/>
<dbReference type="CTD" id="100131980"/>
<dbReference type="GeneCards" id="ZNF705G"/>
<dbReference type="HGNC" id="HGNC:37134">
    <property type="gene designation" value="ZNF705G"/>
</dbReference>
<dbReference type="HPA" id="ENSG00000215372">
    <property type="expression patterns" value="Not detected"/>
</dbReference>
<dbReference type="neXtProt" id="NX_A8MUZ8"/>
<dbReference type="OpenTargets" id="ENSG00000215372"/>
<dbReference type="PharmGKB" id="PA165586029"/>
<dbReference type="VEuPathDB" id="HostDB:ENSG00000215372"/>
<dbReference type="eggNOG" id="KOG1721">
    <property type="taxonomic scope" value="Eukaryota"/>
</dbReference>
<dbReference type="GeneTree" id="ENSGT00940000163626"/>
<dbReference type="HOGENOM" id="CLU_002678_0_7_1"/>
<dbReference type="InParanoid" id="A8MUZ8"/>
<dbReference type="OMA" id="STEPHKQ"/>
<dbReference type="OrthoDB" id="9520929at2759"/>
<dbReference type="PAN-GO" id="A8MUZ8">
    <property type="GO annotations" value="3 GO annotations based on evolutionary models"/>
</dbReference>
<dbReference type="PhylomeDB" id="A8MUZ8"/>
<dbReference type="TreeFam" id="TF338497"/>
<dbReference type="PathwayCommons" id="A8MUZ8"/>
<dbReference type="Reactome" id="R-HSA-212436">
    <property type="pathway name" value="Generic Transcription Pathway"/>
</dbReference>
<dbReference type="SignaLink" id="A8MUZ8"/>
<dbReference type="BioGRID-ORCS" id="100131980">
    <property type="hits" value="101 hits in 957 CRISPR screens"/>
</dbReference>
<dbReference type="GenomeRNAi" id="100131980"/>
<dbReference type="Pharos" id="A8MUZ8">
    <property type="development level" value="Tdark"/>
</dbReference>
<dbReference type="PRO" id="PR:A8MUZ8"/>
<dbReference type="Proteomes" id="UP000005640">
    <property type="component" value="Chromosome 8"/>
</dbReference>
<dbReference type="RNAct" id="A8MUZ8">
    <property type="molecule type" value="protein"/>
</dbReference>
<dbReference type="Bgee" id="ENSG00000215372">
    <property type="expression patterns" value="Expressed in right testis and 1 other cell type or tissue"/>
</dbReference>
<dbReference type="GO" id="GO:0005634">
    <property type="term" value="C:nucleus"/>
    <property type="evidence" value="ECO:0000318"/>
    <property type="project" value="GO_Central"/>
</dbReference>
<dbReference type="GO" id="GO:0000981">
    <property type="term" value="F:DNA-binding transcription factor activity, RNA polymerase II-specific"/>
    <property type="evidence" value="ECO:0000318"/>
    <property type="project" value="GO_Central"/>
</dbReference>
<dbReference type="GO" id="GO:0000977">
    <property type="term" value="F:RNA polymerase II transcription regulatory region sequence-specific DNA binding"/>
    <property type="evidence" value="ECO:0000318"/>
    <property type="project" value="GO_Central"/>
</dbReference>
<dbReference type="GO" id="GO:0008270">
    <property type="term" value="F:zinc ion binding"/>
    <property type="evidence" value="ECO:0007669"/>
    <property type="project" value="UniProtKB-KW"/>
</dbReference>
<dbReference type="GO" id="GO:0006357">
    <property type="term" value="P:regulation of transcription by RNA polymerase II"/>
    <property type="evidence" value="ECO:0000318"/>
    <property type="project" value="GO_Central"/>
</dbReference>
<dbReference type="CDD" id="cd07765">
    <property type="entry name" value="KRAB_A-box"/>
    <property type="match status" value="1"/>
</dbReference>
<dbReference type="FunFam" id="3.30.160.60:FF:000176">
    <property type="entry name" value="zinc finger protein 70"/>
    <property type="match status" value="1"/>
</dbReference>
<dbReference type="FunFam" id="3.30.160.60:FF:002754">
    <property type="entry name" value="Zinc finger protein 705A"/>
    <property type="match status" value="1"/>
</dbReference>
<dbReference type="FunFam" id="3.30.160.60:FF:002524">
    <property type="entry name" value="Zinc finger protein 705F"/>
    <property type="match status" value="2"/>
</dbReference>
<dbReference type="FunFam" id="3.30.160.60:FF:000787">
    <property type="entry name" value="Zinc finger protein 784"/>
    <property type="match status" value="1"/>
</dbReference>
<dbReference type="Gene3D" id="6.10.140.140">
    <property type="match status" value="1"/>
</dbReference>
<dbReference type="Gene3D" id="3.30.160.60">
    <property type="entry name" value="Classic Zinc Finger"/>
    <property type="match status" value="6"/>
</dbReference>
<dbReference type="InterPro" id="IPR001909">
    <property type="entry name" value="KRAB"/>
</dbReference>
<dbReference type="InterPro" id="IPR036051">
    <property type="entry name" value="KRAB_dom_sf"/>
</dbReference>
<dbReference type="InterPro" id="IPR036236">
    <property type="entry name" value="Znf_C2H2_sf"/>
</dbReference>
<dbReference type="InterPro" id="IPR013087">
    <property type="entry name" value="Znf_C2H2_type"/>
</dbReference>
<dbReference type="PANTHER" id="PTHR24381">
    <property type="entry name" value="ZINC FINGER PROTEIN"/>
    <property type="match status" value="1"/>
</dbReference>
<dbReference type="PANTHER" id="PTHR24381:SF19">
    <property type="entry name" value="ZINC FINGER PROTEIN 705G-RELATED"/>
    <property type="match status" value="1"/>
</dbReference>
<dbReference type="Pfam" id="PF01352">
    <property type="entry name" value="KRAB"/>
    <property type="match status" value="1"/>
</dbReference>
<dbReference type="Pfam" id="PF00096">
    <property type="entry name" value="zf-C2H2"/>
    <property type="match status" value="2"/>
</dbReference>
<dbReference type="SMART" id="SM00349">
    <property type="entry name" value="KRAB"/>
    <property type="match status" value="1"/>
</dbReference>
<dbReference type="SMART" id="SM00355">
    <property type="entry name" value="ZnF_C2H2"/>
    <property type="match status" value="3"/>
</dbReference>
<dbReference type="SUPFAM" id="SSF57667">
    <property type="entry name" value="beta-beta-alpha zinc fingers"/>
    <property type="match status" value="4"/>
</dbReference>
<dbReference type="SUPFAM" id="SSF109640">
    <property type="entry name" value="KRAB domain (Kruppel-associated box)"/>
    <property type="match status" value="1"/>
</dbReference>
<dbReference type="PROSITE" id="PS50805">
    <property type="entry name" value="KRAB"/>
    <property type="match status" value="1"/>
</dbReference>
<dbReference type="PROSITE" id="PS00028">
    <property type="entry name" value="ZINC_FINGER_C2H2_1"/>
    <property type="match status" value="2"/>
</dbReference>
<dbReference type="PROSITE" id="PS50157">
    <property type="entry name" value="ZINC_FINGER_C2H2_2"/>
    <property type="match status" value="4"/>
</dbReference>
<comment type="function">
    <text evidence="1">May be involved in transcriptional regulation.</text>
</comment>
<comment type="subcellular location">
    <subcellularLocation>
        <location evidence="4">Nucleus</location>
    </subcellularLocation>
</comment>
<comment type="similarity">
    <text evidence="4">Belongs to the krueppel C2H2-type zinc-finger protein family.</text>
</comment>
<proteinExistence type="evidence at transcript level"/>
<gene>
    <name type="primary">ZNF705G</name>
</gene>
<organism>
    <name type="scientific">Homo sapiens</name>
    <name type="common">Human</name>
    <dbReference type="NCBI Taxonomy" id="9606"/>
    <lineage>
        <taxon>Eukaryota</taxon>
        <taxon>Metazoa</taxon>
        <taxon>Chordata</taxon>
        <taxon>Craniata</taxon>
        <taxon>Vertebrata</taxon>
        <taxon>Euteleostomi</taxon>
        <taxon>Mammalia</taxon>
        <taxon>Eutheria</taxon>
        <taxon>Euarchontoglires</taxon>
        <taxon>Primates</taxon>
        <taxon>Haplorrhini</taxon>
        <taxon>Catarrhini</taxon>
        <taxon>Hominidae</taxon>
        <taxon>Homo</taxon>
    </lineage>
</organism>
<protein>
    <recommendedName>
        <fullName>Putative zinc finger protein 705G</fullName>
    </recommendedName>
</protein>